<comment type="subcellular location">
    <subcellularLocation>
        <location evidence="1">Cell membrane</location>
        <topology evidence="1">Multi-pass membrane protein</topology>
    </subcellularLocation>
</comment>
<comment type="similarity">
    <text evidence="1">Belongs to the UPF0060 family.</text>
</comment>
<gene>
    <name type="ordered locus">MT2717</name>
</gene>
<proteinExistence type="inferred from homology"/>
<reference key="1">
    <citation type="journal article" date="2002" name="J. Bacteriol.">
        <title>Whole-genome comparison of Mycobacterium tuberculosis clinical and laboratory strains.</title>
        <authorList>
            <person name="Fleischmann R.D."/>
            <person name="Alland D."/>
            <person name="Eisen J.A."/>
            <person name="Carpenter L."/>
            <person name="White O."/>
            <person name="Peterson J.D."/>
            <person name="DeBoy R.T."/>
            <person name="Dodson R.J."/>
            <person name="Gwinn M.L."/>
            <person name="Haft D.H."/>
            <person name="Hickey E.K."/>
            <person name="Kolonay J.F."/>
            <person name="Nelson W.C."/>
            <person name="Umayam L.A."/>
            <person name="Ermolaeva M.D."/>
            <person name="Salzberg S.L."/>
            <person name="Delcher A."/>
            <person name="Utterback T.R."/>
            <person name="Weidman J.F."/>
            <person name="Khouri H.M."/>
            <person name="Gill J."/>
            <person name="Mikula A."/>
            <person name="Bishai W."/>
            <person name="Jacobs W.R. Jr."/>
            <person name="Venter J.C."/>
            <person name="Fraser C.M."/>
        </authorList>
    </citation>
    <scope>NUCLEOTIDE SEQUENCE [LARGE SCALE GENOMIC DNA]</scope>
    <source>
        <strain>CDC 1551 / Oshkosh</strain>
    </source>
</reference>
<accession>P9WFN8</accession>
<accession>L0TD48</accession>
<accession>P67146</accession>
<accession>P71938</accession>
<keyword id="KW-1003">Cell membrane</keyword>
<keyword id="KW-0472">Membrane</keyword>
<keyword id="KW-1185">Reference proteome</keyword>
<keyword id="KW-0812">Transmembrane</keyword>
<keyword id="KW-1133">Transmembrane helix</keyword>
<name>Y2639_MYCTO</name>
<sequence>MVVRSILLFVLAAVAEIGGAWLVWQGVREQRGWLWAGLGVIALGVYGFFATLQPDAHFGRVLAAYGGVFVAGSLAWGMALDGFRPDRWDVIGALGCMAGVAVIMYAPRGH</sequence>
<organism>
    <name type="scientific">Mycobacterium tuberculosis (strain CDC 1551 / Oshkosh)</name>
    <dbReference type="NCBI Taxonomy" id="83331"/>
    <lineage>
        <taxon>Bacteria</taxon>
        <taxon>Bacillati</taxon>
        <taxon>Actinomycetota</taxon>
        <taxon>Actinomycetes</taxon>
        <taxon>Mycobacteriales</taxon>
        <taxon>Mycobacteriaceae</taxon>
        <taxon>Mycobacterium</taxon>
        <taxon>Mycobacterium tuberculosis complex</taxon>
    </lineage>
</organism>
<protein>
    <recommendedName>
        <fullName evidence="1">UPF0060 membrane protein MT2717</fullName>
    </recommendedName>
</protein>
<feature type="chain" id="PRO_0000428506" description="UPF0060 membrane protein MT2717">
    <location>
        <begin position="1"/>
        <end position="110"/>
    </location>
</feature>
<feature type="transmembrane region" description="Helical" evidence="1">
    <location>
        <begin position="6"/>
        <end position="26"/>
    </location>
</feature>
<feature type="transmembrane region" description="Helical" evidence="1">
    <location>
        <begin position="32"/>
        <end position="52"/>
    </location>
</feature>
<feature type="transmembrane region" description="Helical" evidence="1">
    <location>
        <begin position="61"/>
        <end position="81"/>
    </location>
</feature>
<feature type="transmembrane region" description="Helical" evidence="1">
    <location>
        <begin position="90"/>
        <end position="110"/>
    </location>
</feature>
<dbReference type="EMBL" id="AE000516">
    <property type="protein sequence ID" value="AAK47031.1"/>
    <property type="molecule type" value="Genomic_DNA"/>
</dbReference>
<dbReference type="PIR" id="C70964">
    <property type="entry name" value="C70964"/>
</dbReference>
<dbReference type="RefSeq" id="WP_003413663.1">
    <property type="nucleotide sequence ID" value="NZ_KK341227.1"/>
</dbReference>
<dbReference type="KEGG" id="mtc:MT2717"/>
<dbReference type="PATRIC" id="fig|83331.31.peg.2926"/>
<dbReference type="HOGENOM" id="CLU_117653_0_1_11"/>
<dbReference type="Proteomes" id="UP000001020">
    <property type="component" value="Chromosome"/>
</dbReference>
<dbReference type="GO" id="GO:0005886">
    <property type="term" value="C:plasma membrane"/>
    <property type="evidence" value="ECO:0007669"/>
    <property type="project" value="UniProtKB-SubCell"/>
</dbReference>
<dbReference type="HAMAP" id="MF_00010">
    <property type="entry name" value="UPF0060"/>
    <property type="match status" value="1"/>
</dbReference>
<dbReference type="InterPro" id="IPR003844">
    <property type="entry name" value="UPF0060"/>
</dbReference>
<dbReference type="NCBIfam" id="NF002586">
    <property type="entry name" value="PRK02237.1"/>
    <property type="match status" value="1"/>
</dbReference>
<dbReference type="PANTHER" id="PTHR36116">
    <property type="entry name" value="UPF0060 MEMBRANE PROTEIN YNFA"/>
    <property type="match status" value="1"/>
</dbReference>
<dbReference type="PANTHER" id="PTHR36116:SF1">
    <property type="entry name" value="UPF0060 MEMBRANE PROTEIN YNFA"/>
    <property type="match status" value="1"/>
</dbReference>
<dbReference type="Pfam" id="PF02694">
    <property type="entry name" value="UPF0060"/>
    <property type="match status" value="1"/>
</dbReference>
<dbReference type="SUPFAM" id="SSF103481">
    <property type="entry name" value="Multidrug resistance efflux transporter EmrE"/>
    <property type="match status" value="1"/>
</dbReference>
<evidence type="ECO:0000255" key="1">
    <source>
        <dbReference type="HAMAP-Rule" id="MF_00010"/>
    </source>
</evidence>